<name>POB3_CRYNB</name>
<comment type="function">
    <text evidence="1">Component of the FACT complex, a general chromatin factor that acts to reorganize nucleosomes. The FACT complex is involved in multiple processes that require DNA as a template such as mRNA elongation, DNA replication and DNA repair. During transcription elongation the FACT complex acts as a histone chaperone that both destabilizes and restores nucleosomal structure. It facilitates the passage of RNA polymerase II and transcription by promoting the dissociation of one histone H2A-H2B dimer from the nucleosome, then subsequently promotes the reestablishment of the nucleosome following the passage of RNA polymerase II (By similarity).</text>
</comment>
<comment type="subunit">
    <text evidence="1">Forms a stable heterodimer with SPT16. The SPT16-POB3 dimer weakly associates with multiple molecules of NHP6 to form the FACT complex (By similarity).</text>
</comment>
<comment type="subcellular location">
    <subcellularLocation>
        <location evidence="1">Nucleus</location>
    </subcellularLocation>
    <subcellularLocation>
        <location evidence="1">Chromosome</location>
    </subcellularLocation>
</comment>
<comment type="miscellaneous">
    <text>In contrast to the orthologous protein in animals and plants, this protein does not contain a HMG box DNA-binding domain. This function may instead be provided by the HMG box of the associated NHP6 protein in the FACT complex of fungi.</text>
</comment>
<comment type="similarity">
    <text evidence="3">Belongs to the SSRP1 family.</text>
</comment>
<evidence type="ECO:0000250" key="1"/>
<evidence type="ECO:0000256" key="2">
    <source>
        <dbReference type="SAM" id="MobiDB-lite"/>
    </source>
</evidence>
<evidence type="ECO:0000305" key="3"/>
<keyword id="KW-0158">Chromosome</keyword>
<keyword id="KW-0227">DNA damage</keyword>
<keyword id="KW-0234">DNA repair</keyword>
<keyword id="KW-0235">DNA replication</keyword>
<keyword id="KW-0539">Nucleus</keyword>
<keyword id="KW-0804">Transcription</keyword>
<keyword id="KW-0805">Transcription regulation</keyword>
<gene>
    <name type="primary">POB3</name>
    <name type="ordered locus">CNBL3050</name>
</gene>
<organism>
    <name type="scientific">Cryptococcus neoformans var. neoformans serotype D (strain B-3501A)</name>
    <name type="common">Filobasidiella neoformans</name>
    <dbReference type="NCBI Taxonomy" id="283643"/>
    <lineage>
        <taxon>Eukaryota</taxon>
        <taxon>Fungi</taxon>
        <taxon>Dikarya</taxon>
        <taxon>Basidiomycota</taxon>
        <taxon>Agaricomycotina</taxon>
        <taxon>Tremellomycetes</taxon>
        <taxon>Tremellales</taxon>
        <taxon>Cryptococcaceae</taxon>
        <taxon>Cryptococcus</taxon>
        <taxon>Cryptococcus neoformans species complex</taxon>
    </lineage>
</organism>
<dbReference type="EMBL" id="AAEY01000057">
    <property type="protein sequence ID" value="EAL17792.1"/>
    <property type="molecule type" value="Genomic_DNA"/>
</dbReference>
<dbReference type="RefSeq" id="XP_772439.1">
    <property type="nucleotide sequence ID" value="XM_767346.1"/>
</dbReference>
<dbReference type="SMR" id="P0CR75"/>
<dbReference type="EnsemblFungi" id="AAW45161">
    <property type="protein sequence ID" value="AAW45161"/>
    <property type="gene ID" value="CNH02980"/>
</dbReference>
<dbReference type="GeneID" id="4939354"/>
<dbReference type="KEGG" id="cnb:CNBL3050"/>
<dbReference type="VEuPathDB" id="FungiDB:CNBL3050"/>
<dbReference type="HOGENOM" id="CLU_017374_3_0_1"/>
<dbReference type="OrthoDB" id="6863at5206"/>
<dbReference type="GO" id="GO:0000781">
    <property type="term" value="C:chromosome, telomeric region"/>
    <property type="evidence" value="ECO:0007669"/>
    <property type="project" value="GOC"/>
</dbReference>
<dbReference type="GO" id="GO:0035101">
    <property type="term" value="C:FACT complex"/>
    <property type="evidence" value="ECO:0007669"/>
    <property type="project" value="EnsemblFungi"/>
</dbReference>
<dbReference type="GO" id="GO:0003677">
    <property type="term" value="F:DNA binding"/>
    <property type="evidence" value="ECO:0007669"/>
    <property type="project" value="InterPro"/>
</dbReference>
<dbReference type="GO" id="GO:0042393">
    <property type="term" value="F:histone binding"/>
    <property type="evidence" value="ECO:0007669"/>
    <property type="project" value="EnsemblFungi"/>
</dbReference>
<dbReference type="GO" id="GO:0031491">
    <property type="term" value="F:nucleosome binding"/>
    <property type="evidence" value="ECO:0007669"/>
    <property type="project" value="EnsemblFungi"/>
</dbReference>
<dbReference type="GO" id="GO:0006281">
    <property type="term" value="P:DNA repair"/>
    <property type="evidence" value="ECO:0007669"/>
    <property type="project" value="UniProtKB-KW"/>
</dbReference>
<dbReference type="GO" id="GO:0006335">
    <property type="term" value="P:DNA replication-dependent chromatin assembly"/>
    <property type="evidence" value="ECO:0007669"/>
    <property type="project" value="EnsemblFungi"/>
</dbReference>
<dbReference type="GO" id="GO:0006261">
    <property type="term" value="P:DNA-templated DNA replication"/>
    <property type="evidence" value="ECO:0007669"/>
    <property type="project" value="EnsemblFungi"/>
</dbReference>
<dbReference type="GO" id="GO:0034728">
    <property type="term" value="P:nucleosome organization"/>
    <property type="evidence" value="ECO:0007669"/>
    <property type="project" value="EnsemblFungi"/>
</dbReference>
<dbReference type="GO" id="GO:0031508">
    <property type="term" value="P:pericentric heterochromatin formation"/>
    <property type="evidence" value="ECO:0007669"/>
    <property type="project" value="EnsemblFungi"/>
</dbReference>
<dbReference type="GO" id="GO:0045899">
    <property type="term" value="P:positive regulation of RNA polymerase II transcription preinitiation complex assembly"/>
    <property type="evidence" value="ECO:0007669"/>
    <property type="project" value="EnsemblFungi"/>
</dbReference>
<dbReference type="GO" id="GO:0030466">
    <property type="term" value="P:silent mating-type cassette heterochromatin formation"/>
    <property type="evidence" value="ECO:0007669"/>
    <property type="project" value="EnsemblFungi"/>
</dbReference>
<dbReference type="GO" id="GO:0031509">
    <property type="term" value="P:subtelomeric heterochromatin formation"/>
    <property type="evidence" value="ECO:0007669"/>
    <property type="project" value="EnsemblFungi"/>
</dbReference>
<dbReference type="CDD" id="cd13230">
    <property type="entry name" value="PH1_SSRP1-like"/>
    <property type="match status" value="1"/>
</dbReference>
<dbReference type="CDD" id="cd13231">
    <property type="entry name" value="PH2_SSRP1-like"/>
    <property type="match status" value="1"/>
</dbReference>
<dbReference type="FunFam" id="2.30.29.220:FF:000003">
    <property type="entry name" value="FACT complex subunit POB3"/>
    <property type="match status" value="1"/>
</dbReference>
<dbReference type="FunFam" id="2.30.29.30:FF:000481">
    <property type="entry name" value="FACT complex subunit POB3"/>
    <property type="match status" value="1"/>
</dbReference>
<dbReference type="FunFam" id="2.30.29.30:FF:000119">
    <property type="entry name" value="FACT complex subunit SSRP1"/>
    <property type="match status" value="1"/>
</dbReference>
<dbReference type="FunFam" id="2.30.29.150:FF:000001">
    <property type="entry name" value="Fact complex subunit ssrp1"/>
    <property type="match status" value="1"/>
</dbReference>
<dbReference type="Gene3D" id="2.30.29.150">
    <property type="match status" value="1"/>
</dbReference>
<dbReference type="Gene3D" id="2.30.29.30">
    <property type="entry name" value="Pleckstrin-homology domain (PH domain)/Phosphotyrosine-binding domain (PTB)"/>
    <property type="match status" value="2"/>
</dbReference>
<dbReference type="Gene3D" id="2.30.29.220">
    <property type="entry name" value="Structure-specific recognition protein (SSRP1)"/>
    <property type="match status" value="1"/>
</dbReference>
<dbReference type="InterPro" id="IPR011993">
    <property type="entry name" value="PH-like_dom_sf"/>
</dbReference>
<dbReference type="InterPro" id="IPR013719">
    <property type="entry name" value="RTT106/SPT16-like_middle_dom"/>
</dbReference>
<dbReference type="InterPro" id="IPR050454">
    <property type="entry name" value="RTT106/SSRP1_HistChap/FACT"/>
</dbReference>
<dbReference type="InterPro" id="IPR048993">
    <property type="entry name" value="SSRP1-like_PH1"/>
</dbReference>
<dbReference type="InterPro" id="IPR000969">
    <property type="entry name" value="SSRP1/POB3"/>
</dbReference>
<dbReference type="InterPro" id="IPR035417">
    <property type="entry name" value="SSRP1/POB3_N"/>
</dbReference>
<dbReference type="InterPro" id="IPR024954">
    <property type="entry name" value="SSRP1_DD"/>
</dbReference>
<dbReference type="InterPro" id="IPR038167">
    <property type="entry name" value="SSRP1_sf"/>
</dbReference>
<dbReference type="PANTHER" id="PTHR45849">
    <property type="entry name" value="FACT COMPLEX SUBUNIT SSRP1"/>
    <property type="match status" value="1"/>
</dbReference>
<dbReference type="PANTHER" id="PTHR45849:SF1">
    <property type="entry name" value="FACT COMPLEX SUBUNIT SSRP1"/>
    <property type="match status" value="1"/>
</dbReference>
<dbReference type="Pfam" id="PF21103">
    <property type="entry name" value="PH1_SSRP1-like"/>
    <property type="match status" value="1"/>
</dbReference>
<dbReference type="Pfam" id="PF17292">
    <property type="entry name" value="POB3_N"/>
    <property type="match status" value="1"/>
</dbReference>
<dbReference type="Pfam" id="PF08512">
    <property type="entry name" value="Rttp106-like_middle"/>
    <property type="match status" value="1"/>
</dbReference>
<dbReference type="Pfam" id="PF03531">
    <property type="entry name" value="SSrecog"/>
    <property type="match status" value="1"/>
</dbReference>
<dbReference type="PRINTS" id="PR00887">
    <property type="entry name" value="SSRCOGNITION"/>
</dbReference>
<dbReference type="SMART" id="SM01287">
    <property type="entry name" value="Rtt106"/>
    <property type="match status" value="1"/>
</dbReference>
<dbReference type="SUPFAM" id="SSF50729">
    <property type="entry name" value="PH domain-like"/>
    <property type="match status" value="1"/>
</dbReference>
<proteinExistence type="inferred from homology"/>
<accession>P0CR75</accession>
<accession>Q55IM8</accession>
<accession>Q5KD17</accession>
<feature type="chain" id="PRO_0000410299" description="FACT complex subunit POB3">
    <location>
        <begin position="1"/>
        <end position="588"/>
    </location>
</feature>
<feature type="region of interest" description="Disordered" evidence="2">
    <location>
        <begin position="185"/>
        <end position="205"/>
    </location>
</feature>
<feature type="region of interest" description="Disordered" evidence="2">
    <location>
        <begin position="469"/>
        <end position="588"/>
    </location>
</feature>
<feature type="compositionally biased region" description="Acidic residues" evidence="2">
    <location>
        <begin position="469"/>
        <end position="486"/>
    </location>
</feature>
<feature type="compositionally biased region" description="Basic and acidic residues" evidence="2">
    <location>
        <begin position="487"/>
        <end position="500"/>
    </location>
</feature>
<feature type="compositionally biased region" description="Acidic residues" evidence="2">
    <location>
        <begin position="509"/>
        <end position="525"/>
    </location>
</feature>
<feature type="compositionally biased region" description="Basic and acidic residues" evidence="2">
    <location>
        <begin position="573"/>
        <end position="588"/>
    </location>
</feature>
<protein>
    <recommendedName>
        <fullName>FACT complex subunit POB3</fullName>
    </recommendedName>
    <alternativeName>
        <fullName>Facilitates chromatin transcription complex subunit POB3</fullName>
    </alternativeName>
</protein>
<reference key="1">
    <citation type="journal article" date="2005" name="Science">
        <title>The genome of the basidiomycetous yeast and human pathogen Cryptococcus neoformans.</title>
        <authorList>
            <person name="Loftus B.J."/>
            <person name="Fung E."/>
            <person name="Roncaglia P."/>
            <person name="Rowley D."/>
            <person name="Amedeo P."/>
            <person name="Bruno D."/>
            <person name="Vamathevan J."/>
            <person name="Miranda M."/>
            <person name="Anderson I.J."/>
            <person name="Fraser J.A."/>
            <person name="Allen J.E."/>
            <person name="Bosdet I.E."/>
            <person name="Brent M.R."/>
            <person name="Chiu R."/>
            <person name="Doering T.L."/>
            <person name="Donlin M.J."/>
            <person name="D'Souza C.A."/>
            <person name="Fox D.S."/>
            <person name="Grinberg V."/>
            <person name="Fu J."/>
            <person name="Fukushima M."/>
            <person name="Haas B.J."/>
            <person name="Huang J.C."/>
            <person name="Janbon G."/>
            <person name="Jones S.J.M."/>
            <person name="Koo H.L."/>
            <person name="Krzywinski M.I."/>
            <person name="Kwon-Chung K.J."/>
            <person name="Lengeler K.B."/>
            <person name="Maiti R."/>
            <person name="Marra M.A."/>
            <person name="Marra R.E."/>
            <person name="Mathewson C.A."/>
            <person name="Mitchell T.G."/>
            <person name="Pertea M."/>
            <person name="Riggs F.R."/>
            <person name="Salzberg S.L."/>
            <person name="Schein J.E."/>
            <person name="Shvartsbeyn A."/>
            <person name="Shin H."/>
            <person name="Shumway M."/>
            <person name="Specht C.A."/>
            <person name="Suh B.B."/>
            <person name="Tenney A."/>
            <person name="Utterback T.R."/>
            <person name="Wickes B.L."/>
            <person name="Wortman J.R."/>
            <person name="Wye N.H."/>
            <person name="Kronstad J.W."/>
            <person name="Lodge J.K."/>
            <person name="Heitman J."/>
            <person name="Davis R.W."/>
            <person name="Fraser C.M."/>
            <person name="Hyman R.W."/>
        </authorList>
    </citation>
    <scope>NUCLEOTIDE SEQUENCE [LARGE SCALE GENOMIC DNA]</scope>
    <source>
        <strain>B-3501A</strain>
    </source>
</reference>
<sequence length="588" mass="65466">MSTVTFENIFHGDSADLGKLRFNPVGFGWKAYQSEDNNPTTYNGSDIRHATWFRVARHFQLRLGMRNSEKPRISFDGFKRDDLDKIKRTLQEYFNITLETRDTSLKGWNWGEAQVKGSDLVFQVQGKTAFDVPLSQVANSNIAGKYEVALEFNPPSNYKFDPKDLNKRPPDEMVEMRFYIPGKSMKKAGSDAGSGGEETELDEEGNEVSAADAFHSLIKEKADIGAVVGDSIVVFEDCLILTPRGRFSIEVYADSIRLVGKSTDHRVPFTSIHRIFLLPKLDDLHVQLVLGLDPPIRQGATRYPFLVAQWPKDEVVNAELNLTDEELAQYPDLEKTYEATTFQVVSRVLKALTGKKVTPPGSLRNAQGLNGIRANVKAVQGELYFLEKGLIFISKQPILIDFSKTDSISFSRVGGGVASARTFDMRVVSKTGGADHVFSAINKQEVGPISSFLQSKNIRLKNEMEEAIVDIDEPFSDDDEEMESPSEDERPSKAKNDKSKTKPVKKAADDDEDESDDEDFEDESSDGGSPSESDSDDDSGMASDASDPMMEELRKKTQAKRTKAKETSGSGSEDEKPKKKKAKKDDDE</sequence>